<keyword id="KW-0067">ATP-binding</keyword>
<keyword id="KW-0072">Autophagy</keyword>
<keyword id="KW-0963">Cytoplasm</keyword>
<keyword id="KW-0418">Kinase</keyword>
<keyword id="KW-0472">Membrane</keyword>
<keyword id="KW-0547">Nucleotide-binding</keyword>
<keyword id="KW-0653">Protein transport</keyword>
<keyword id="KW-0723">Serine/threonine-protein kinase</keyword>
<keyword id="KW-0808">Transferase</keyword>
<keyword id="KW-0813">Transport</keyword>
<accession>Q6H9I1</accession>
<name>ATG1_BOTFU</name>
<organism>
    <name type="scientific">Botryotinia fuckeliana</name>
    <name type="common">Noble rot fungus</name>
    <name type="synonym">Botrytis cinerea</name>
    <dbReference type="NCBI Taxonomy" id="40559"/>
    <lineage>
        <taxon>Eukaryota</taxon>
        <taxon>Fungi</taxon>
        <taxon>Dikarya</taxon>
        <taxon>Ascomycota</taxon>
        <taxon>Pezizomycotina</taxon>
        <taxon>Leotiomycetes</taxon>
        <taxon>Helotiales</taxon>
        <taxon>Sclerotiniaceae</taxon>
        <taxon>Botrytis</taxon>
    </lineage>
</organism>
<proteinExistence type="inferred from homology"/>
<sequence>MASTTTSTSSLSSRRQKTGVGSFTINEQIGKGSFATVYRGTHMPSGNLVAIKSVNLSRLNKKLKDNLYVEIEILKSLYHPHIVALIDCRESASHIHLMMEYCELGDLSYFIKKRDRLADNPTLYDMVQKYPMPVEGGLNQVVVRHFFKQLSSAMEFLRERDFVHRDVKPQNLLLIPSPEWIAKRAKGGPEAMKASKESVVAMVGINSLPMLKLADFGFARSLPSTSLAETLCGSPLYMAPEILRYEKYDARADLWSIGTVLYEMMTGRPPFKAINHVQLLQKIEKNQDEIRFPSRGIYSRDLKDIVRRLLKKKPEDRITFPEYFAHPVVTEPIPGLVGDDRPKEKSPETSIVRQPSLRDRQRESPTVKHIDTAYESLITRDIGEQSPRTPNIESNQPFGTPGRSSGRPDSRDRPSPVSAATAPNVDTLPRQRDRKDRTEPNYAPIVRTGSTKQRYDEQANLQPKNEVQSSNSITEAEQDVRDAREYVLVEKKAVEVNAFADEMAANPRLGRANSAPKQLPRRHTSMGEPNSTTGAVAVPPSRIVQRASGRAQPDTSSARNSYGSYGKTGSSPSTASAIAKALQGASVRVFGVSWSPTLIGKGPSPPQLYNPYPAYPTPNAGLIGDGRPIDEDQRVVNIIEDSATRSDVVYGFAEVKYRQLIPLAPSMNHGLGGPNPERTGDAMDEDDGLTVEAIVNLSEEALVLYVKSLSLLSKSMDIAGAWWSRKQRGGIVSGGHTPGSDSSSAAQAGNRINGAVQWVRTRFNEVLEKAELVRLKLVEAQKRLPEDHPGHPNNRSTASRLVGGSSTTDGVVLSSGITAEKLMYDRALEMSRTAAINELANEDLPGCEISYTTAIRMLEAVLENDEELIPRKRSSSLREDKEKSEGGEVNGINFGDRKDVLKVLQMIRTRLQVLKKKMTAIAKHQSMPPPSSSPRRSYSGGTTPTINNTPPK</sequence>
<feature type="chain" id="PRO_0000085640" description="Serine/threonine-protein kinase ATG1">
    <location>
        <begin position="1"/>
        <end position="952"/>
    </location>
</feature>
<feature type="domain" description="Protein kinase" evidence="2">
    <location>
        <begin position="23"/>
        <end position="329"/>
    </location>
</feature>
<feature type="region of interest" description="Disordered" evidence="4">
    <location>
        <begin position="331"/>
        <end position="478"/>
    </location>
</feature>
<feature type="region of interest" description="Disordered" evidence="4">
    <location>
        <begin position="510"/>
        <end position="573"/>
    </location>
</feature>
<feature type="region of interest" description="Disordered" evidence="4">
    <location>
        <begin position="783"/>
        <end position="806"/>
    </location>
</feature>
<feature type="region of interest" description="Disordered" evidence="4">
    <location>
        <begin position="920"/>
        <end position="952"/>
    </location>
</feature>
<feature type="compositionally biased region" description="Basic and acidic residues" evidence="4">
    <location>
        <begin position="338"/>
        <end position="347"/>
    </location>
</feature>
<feature type="compositionally biased region" description="Basic and acidic residues" evidence="4">
    <location>
        <begin position="356"/>
        <end position="372"/>
    </location>
</feature>
<feature type="compositionally biased region" description="Polar residues" evidence="4">
    <location>
        <begin position="386"/>
        <end position="398"/>
    </location>
</feature>
<feature type="compositionally biased region" description="Basic and acidic residues" evidence="4">
    <location>
        <begin position="429"/>
        <end position="439"/>
    </location>
</feature>
<feature type="compositionally biased region" description="Polar residues" evidence="4">
    <location>
        <begin position="459"/>
        <end position="475"/>
    </location>
</feature>
<feature type="compositionally biased region" description="Polar residues" evidence="4">
    <location>
        <begin position="553"/>
        <end position="573"/>
    </location>
</feature>
<feature type="compositionally biased region" description="Polar residues" evidence="4">
    <location>
        <begin position="793"/>
        <end position="806"/>
    </location>
</feature>
<feature type="compositionally biased region" description="Low complexity" evidence="4">
    <location>
        <begin position="933"/>
        <end position="952"/>
    </location>
</feature>
<feature type="active site" description="Proton acceptor" evidence="2 3">
    <location>
        <position position="166"/>
    </location>
</feature>
<feature type="binding site" evidence="2">
    <location>
        <begin position="29"/>
        <end position="37"/>
    </location>
    <ligand>
        <name>ATP</name>
        <dbReference type="ChEBI" id="CHEBI:30616"/>
    </ligand>
</feature>
<feature type="binding site" evidence="2">
    <location>
        <position position="52"/>
    </location>
    <ligand>
        <name>ATP</name>
        <dbReference type="ChEBI" id="CHEBI:30616"/>
    </ligand>
</feature>
<comment type="function">
    <text evidence="1">Serine/threonine protein kinase involved in the cytoplasm to vacuole transport (Cvt) and found to be essential in autophagy, where it is required for the formation of autophagosomes. Involved in the clearance of protein aggregates which cannot be efficiently cleared by the proteasome. Required for selective autophagic degradation of the nucleus (nucleophagy) as well as for mitophagy which contributes to regulate mitochondrial quantity and quality by eliminating the mitochondria to a basal level to fulfill cellular energy requirements and preventing excess ROS production. Also involved in endoplasmic reticulum-specific autophagic process, in selective removal of ER-associated degradation (ERAD) substrates. Plays a key role in ATG9 and ATG23 cycling through the pre-autophagosomal structure and is necessary to promote ATG18 binding to ATG9 through phosphorylation of ATG9. Catalyzes phosphorylation of ATG4, decreasing the interaction between ATG4 and ATG8 and impairing deconjugation of PE-conjugated forms of ATG8.</text>
</comment>
<comment type="catalytic activity">
    <reaction evidence="1">
        <text>L-seryl-[protein] + ATP = O-phospho-L-seryl-[protein] + ADP + H(+)</text>
        <dbReference type="Rhea" id="RHEA:17989"/>
        <dbReference type="Rhea" id="RHEA-COMP:9863"/>
        <dbReference type="Rhea" id="RHEA-COMP:11604"/>
        <dbReference type="ChEBI" id="CHEBI:15378"/>
        <dbReference type="ChEBI" id="CHEBI:29999"/>
        <dbReference type="ChEBI" id="CHEBI:30616"/>
        <dbReference type="ChEBI" id="CHEBI:83421"/>
        <dbReference type="ChEBI" id="CHEBI:456216"/>
        <dbReference type="EC" id="2.7.11.1"/>
    </reaction>
</comment>
<comment type="catalytic activity">
    <reaction evidence="1">
        <text>L-threonyl-[protein] + ATP = O-phospho-L-threonyl-[protein] + ADP + H(+)</text>
        <dbReference type="Rhea" id="RHEA:46608"/>
        <dbReference type="Rhea" id="RHEA-COMP:11060"/>
        <dbReference type="Rhea" id="RHEA-COMP:11605"/>
        <dbReference type="ChEBI" id="CHEBI:15378"/>
        <dbReference type="ChEBI" id="CHEBI:30013"/>
        <dbReference type="ChEBI" id="CHEBI:30616"/>
        <dbReference type="ChEBI" id="CHEBI:61977"/>
        <dbReference type="ChEBI" id="CHEBI:456216"/>
        <dbReference type="EC" id="2.7.11.1"/>
    </reaction>
</comment>
<comment type="subunit">
    <text evidence="1">Homodimer. Forms a ternary complex with ATG13 and ATG17.</text>
</comment>
<comment type="subcellular location">
    <subcellularLocation>
        <location evidence="1">Cytoplasm</location>
    </subcellularLocation>
    <subcellularLocation>
        <location evidence="1">Preautophagosomal structure membrane</location>
        <topology evidence="1">Peripheral membrane protein</topology>
    </subcellularLocation>
</comment>
<comment type="similarity">
    <text evidence="2">Belongs to the protein kinase superfamily. Ser/Thr protein kinase family. APG1/unc-51/ULK1 subfamily.</text>
</comment>
<evidence type="ECO:0000250" key="1">
    <source>
        <dbReference type="UniProtKB" id="P53104"/>
    </source>
</evidence>
<evidence type="ECO:0000255" key="2">
    <source>
        <dbReference type="PROSITE-ProRule" id="PRU00159"/>
    </source>
</evidence>
<evidence type="ECO:0000255" key="3">
    <source>
        <dbReference type="PROSITE-ProRule" id="PRU10027"/>
    </source>
</evidence>
<evidence type="ECO:0000256" key="4">
    <source>
        <dbReference type="SAM" id="MobiDB-lite"/>
    </source>
</evidence>
<evidence type="ECO:0000303" key="5">
    <source ref="1"/>
</evidence>
<dbReference type="EC" id="2.7.11.1" evidence="1"/>
<dbReference type="EMBL" id="AJ608273">
    <property type="protein sequence ID" value="CAE55218.1"/>
    <property type="molecule type" value="Genomic_DNA"/>
</dbReference>
<dbReference type="SMR" id="Q6H9I1"/>
<dbReference type="OMA" id="INNVVQW"/>
<dbReference type="GO" id="GO:1990316">
    <property type="term" value="C:Atg1/ULK1 kinase complex"/>
    <property type="evidence" value="ECO:0007669"/>
    <property type="project" value="EnsemblFungi"/>
</dbReference>
<dbReference type="GO" id="GO:0000421">
    <property type="term" value="C:autophagosome membrane"/>
    <property type="evidence" value="ECO:0007669"/>
    <property type="project" value="EnsemblFungi"/>
</dbReference>
<dbReference type="GO" id="GO:0005829">
    <property type="term" value="C:cytosol"/>
    <property type="evidence" value="ECO:0007669"/>
    <property type="project" value="EnsemblFungi"/>
</dbReference>
<dbReference type="GO" id="GO:0061908">
    <property type="term" value="C:phagophore"/>
    <property type="evidence" value="ECO:0007669"/>
    <property type="project" value="EnsemblFungi"/>
</dbReference>
<dbReference type="GO" id="GO:0034045">
    <property type="term" value="C:phagophore assembly site membrane"/>
    <property type="evidence" value="ECO:0007669"/>
    <property type="project" value="UniProtKB-SubCell"/>
</dbReference>
<dbReference type="GO" id="GO:0120095">
    <property type="term" value="C:vacuole-isolation membrane contact site"/>
    <property type="evidence" value="ECO:0007669"/>
    <property type="project" value="EnsemblFungi"/>
</dbReference>
<dbReference type="GO" id="GO:0005524">
    <property type="term" value="F:ATP binding"/>
    <property type="evidence" value="ECO:0007669"/>
    <property type="project" value="UniProtKB-KW"/>
</dbReference>
<dbReference type="GO" id="GO:0106310">
    <property type="term" value="F:protein serine kinase activity"/>
    <property type="evidence" value="ECO:0007669"/>
    <property type="project" value="RHEA"/>
</dbReference>
<dbReference type="GO" id="GO:0004674">
    <property type="term" value="F:protein serine/threonine kinase activity"/>
    <property type="evidence" value="ECO:0007669"/>
    <property type="project" value="UniProtKB-KW"/>
</dbReference>
<dbReference type="GO" id="GO:0000422">
    <property type="term" value="P:autophagy of mitochondrion"/>
    <property type="evidence" value="ECO:0007669"/>
    <property type="project" value="EnsemblFungi"/>
</dbReference>
<dbReference type="GO" id="GO:0006995">
    <property type="term" value="P:cellular response to nitrogen starvation"/>
    <property type="evidence" value="ECO:0007669"/>
    <property type="project" value="EnsemblFungi"/>
</dbReference>
<dbReference type="GO" id="GO:0051365">
    <property type="term" value="P:cellular response to potassium ion starvation"/>
    <property type="evidence" value="ECO:0007669"/>
    <property type="project" value="EnsemblFungi"/>
</dbReference>
<dbReference type="GO" id="GO:0034727">
    <property type="term" value="P:piecemeal microautophagy of the nucleus"/>
    <property type="evidence" value="ECO:0007669"/>
    <property type="project" value="EnsemblFungi"/>
</dbReference>
<dbReference type="GO" id="GO:0034497">
    <property type="term" value="P:protein localization to phagophore assembly site"/>
    <property type="evidence" value="ECO:0007669"/>
    <property type="project" value="EnsemblFungi"/>
</dbReference>
<dbReference type="GO" id="GO:0015031">
    <property type="term" value="P:protein transport"/>
    <property type="evidence" value="ECO:0007669"/>
    <property type="project" value="UniProtKB-KW"/>
</dbReference>
<dbReference type="GO" id="GO:0010506">
    <property type="term" value="P:regulation of autophagy"/>
    <property type="evidence" value="ECO:0007669"/>
    <property type="project" value="InterPro"/>
</dbReference>
<dbReference type="GO" id="GO:0061709">
    <property type="term" value="P:reticulophagy"/>
    <property type="evidence" value="ECO:0007669"/>
    <property type="project" value="EnsemblFungi"/>
</dbReference>
<dbReference type="CDD" id="cd14009">
    <property type="entry name" value="STKc_ATG1_ULK_like"/>
    <property type="match status" value="1"/>
</dbReference>
<dbReference type="FunFam" id="3.30.200.20:FF:000042">
    <property type="entry name" value="Aurora kinase A"/>
    <property type="match status" value="1"/>
</dbReference>
<dbReference type="FunFam" id="1.10.510.10:FF:000817">
    <property type="entry name" value="Serine/threonine-protein kinase ATG1"/>
    <property type="match status" value="1"/>
</dbReference>
<dbReference type="Gene3D" id="1.10.510.10">
    <property type="entry name" value="Transferase(Phosphotransferase) domain 1"/>
    <property type="match status" value="1"/>
</dbReference>
<dbReference type="InterPro" id="IPR045269">
    <property type="entry name" value="Atg1-like"/>
</dbReference>
<dbReference type="InterPro" id="IPR048941">
    <property type="entry name" value="ATG1-like_MIT2"/>
</dbReference>
<dbReference type="InterPro" id="IPR022708">
    <property type="entry name" value="Atg1-like_tMIT"/>
</dbReference>
<dbReference type="InterPro" id="IPR011009">
    <property type="entry name" value="Kinase-like_dom_sf"/>
</dbReference>
<dbReference type="InterPro" id="IPR000719">
    <property type="entry name" value="Prot_kinase_dom"/>
</dbReference>
<dbReference type="InterPro" id="IPR017441">
    <property type="entry name" value="Protein_kinase_ATP_BS"/>
</dbReference>
<dbReference type="InterPro" id="IPR008271">
    <property type="entry name" value="Ser/Thr_kinase_AS"/>
</dbReference>
<dbReference type="PANTHER" id="PTHR24348:SF22">
    <property type="entry name" value="NON-SPECIFIC SERINE_THREONINE PROTEIN KINASE"/>
    <property type="match status" value="1"/>
</dbReference>
<dbReference type="PANTHER" id="PTHR24348">
    <property type="entry name" value="SERINE/THREONINE-PROTEIN KINASE UNC-51-RELATED"/>
    <property type="match status" value="1"/>
</dbReference>
<dbReference type="Pfam" id="PF12063">
    <property type="entry name" value="ATG1-like_MIT1"/>
    <property type="match status" value="1"/>
</dbReference>
<dbReference type="Pfam" id="PF21127">
    <property type="entry name" value="ATG1-like_MIT2"/>
    <property type="match status" value="1"/>
</dbReference>
<dbReference type="Pfam" id="PF00069">
    <property type="entry name" value="Pkinase"/>
    <property type="match status" value="1"/>
</dbReference>
<dbReference type="SMART" id="SM00220">
    <property type="entry name" value="S_TKc"/>
    <property type="match status" value="1"/>
</dbReference>
<dbReference type="SUPFAM" id="SSF56112">
    <property type="entry name" value="Protein kinase-like (PK-like)"/>
    <property type="match status" value="1"/>
</dbReference>
<dbReference type="PROSITE" id="PS00107">
    <property type="entry name" value="PROTEIN_KINASE_ATP"/>
    <property type="match status" value="1"/>
</dbReference>
<dbReference type="PROSITE" id="PS50011">
    <property type="entry name" value="PROTEIN_KINASE_DOM"/>
    <property type="match status" value="1"/>
</dbReference>
<dbReference type="PROSITE" id="PS00108">
    <property type="entry name" value="PROTEIN_KINASE_ST"/>
    <property type="match status" value="1"/>
</dbReference>
<reference key="1">
    <citation type="submission" date="2003-11" db="EMBL/GenBank/DDBJ databases">
        <title>bpk3, a clk-like serine-threonine protein kinase from Botryotinia fuckeliana.</title>
        <authorList>
            <person name="Schulze Gronover C."/>
            <person name="Tudzynski P."/>
            <person name="Tudzynski B."/>
        </authorList>
    </citation>
    <scope>NUCLEOTIDE SEQUENCE [GENOMIC DNA]</scope>
    <source>
        <strain>SAS56</strain>
    </source>
</reference>
<gene>
    <name evidence="1" type="primary">atg1</name>
    <name evidence="5" type="synonym">bpk3</name>
</gene>
<protein>
    <recommendedName>
        <fullName evidence="1">Serine/threonine-protein kinase ATG1</fullName>
        <ecNumber evidence="1">2.7.11.1</ecNumber>
    </recommendedName>
    <alternativeName>
        <fullName evidence="1">Autophagy-related protein 1</fullName>
    </alternativeName>
    <alternativeName>
        <fullName evidence="5">Botryotinia fuckeliana putative kinase exons 1-3</fullName>
    </alternativeName>
</protein>